<gene>
    <name type="ordered locus">ECU08_2070</name>
</gene>
<feature type="chain" id="PRO_0000223175" description="UPF0329 protein ECU08_2070">
    <location>
        <begin position="1"/>
        <end position="619"/>
    </location>
</feature>
<feature type="region of interest" description="Disordered" evidence="1">
    <location>
        <begin position="350"/>
        <end position="425"/>
    </location>
</feature>
<feature type="compositionally biased region" description="Basic and acidic residues" evidence="1">
    <location>
        <begin position="350"/>
        <end position="359"/>
    </location>
</feature>
<feature type="compositionally biased region" description="Basic and acidic residues" evidence="1">
    <location>
        <begin position="369"/>
        <end position="385"/>
    </location>
</feature>
<feature type="compositionally biased region" description="Acidic residues" evidence="1">
    <location>
        <begin position="386"/>
        <end position="396"/>
    </location>
</feature>
<reference key="1">
    <citation type="journal article" date="2001" name="Nature">
        <title>Genome sequence and gene compaction of the eukaryote parasite Encephalitozoon cuniculi.</title>
        <authorList>
            <person name="Katinka M.D."/>
            <person name="Duprat S."/>
            <person name="Cornillot E."/>
            <person name="Metenier G."/>
            <person name="Thomarat F."/>
            <person name="Prensier G."/>
            <person name="Barbe V."/>
            <person name="Peyretaillade E."/>
            <person name="Brottier P."/>
            <person name="Wincker P."/>
            <person name="Delbac F."/>
            <person name="El Alaoui H."/>
            <person name="Peyret P."/>
            <person name="Saurin W."/>
            <person name="Gouy M."/>
            <person name="Weissenbach J."/>
            <person name="Vivares C.P."/>
        </authorList>
    </citation>
    <scope>NUCLEOTIDE SEQUENCE [LARGE SCALE GENOMIC DNA]</scope>
    <source>
        <strain>GB-M1</strain>
    </source>
</reference>
<keyword id="KW-1185">Reference proteome</keyword>
<protein>
    <recommendedName>
        <fullName>UPF0329 protein ECU08_2070</fullName>
    </recommendedName>
</protein>
<name>Y8K7_ENCCU</name>
<comment type="similarity">
    <text evidence="2">Belongs to the UPF0329 family.</text>
</comment>
<organism>
    <name type="scientific">Encephalitozoon cuniculi (strain GB-M1)</name>
    <name type="common">Microsporidian parasite</name>
    <dbReference type="NCBI Taxonomy" id="284813"/>
    <lineage>
        <taxon>Eukaryota</taxon>
        <taxon>Fungi</taxon>
        <taxon>Fungi incertae sedis</taxon>
        <taxon>Microsporidia</taxon>
        <taxon>Unikaryonidae</taxon>
        <taxon>Encephalitozoon</taxon>
    </lineage>
</organism>
<accession>Q8SUH9</accession>
<evidence type="ECO:0000256" key="1">
    <source>
        <dbReference type="SAM" id="MobiDB-lite"/>
    </source>
</evidence>
<evidence type="ECO:0000305" key="2"/>
<dbReference type="EMBL" id="AL590448">
    <property type="protein sequence ID" value="CAD26509.1"/>
    <property type="molecule type" value="Genomic_DNA"/>
</dbReference>
<dbReference type="RefSeq" id="NP_597333.1">
    <property type="nucleotide sequence ID" value="NM_001041942.1"/>
</dbReference>
<dbReference type="SMR" id="Q8SUH9"/>
<dbReference type="STRING" id="284813.Q8SUH9"/>
<dbReference type="GeneID" id="859755"/>
<dbReference type="KEGG" id="ecu:ECU08_2070"/>
<dbReference type="VEuPathDB" id="MicrosporidiaDB:ECU08_2070"/>
<dbReference type="HOGENOM" id="CLU_035434_0_0_1"/>
<dbReference type="InParanoid" id="Q8SUH9"/>
<dbReference type="Proteomes" id="UP000000819">
    <property type="component" value="Chromosome VIII"/>
</dbReference>
<dbReference type="InterPro" id="IPR022115">
    <property type="entry name" value="DUF3654"/>
</dbReference>
<dbReference type="InterPro" id="IPR011667">
    <property type="entry name" value="UPF0329"/>
</dbReference>
<dbReference type="Pfam" id="PF07753">
    <property type="entry name" value="DUF1609"/>
    <property type="match status" value="1"/>
</dbReference>
<dbReference type="Pfam" id="PF12376">
    <property type="entry name" value="DUF3654"/>
    <property type="match status" value="1"/>
</dbReference>
<sequence>MRILLIYMLGLSGIACASSIKEIVKESREKLEKGLGYKLSSSEIRMLRRLFEKNAGLETRVVIPVILHQSKVVVSPGTRYRDIEEGERKYVEKVIKLLPEVAWRSITHIYALANNDWAVDLMYDVFDKASSWRSDTVALYKGTEKKYGMKFTDLVNGIFEQNNCILKEFGRLLADRVEILIQELPGSLDDVEKKREEEVLRKIKEYGRRLCTKEKQDEIIKAQRIMCNVCEYIWKREEDRKSFIMEVYSTYLKLREMESNVDEIEEPLIYFVDHRGLINACDKYKSMDIMAELILQLFLQGKNIDDKSIKSAVRSVRERKRLEEMREMEERKRREEERAKNEEELLRMVEREKREESKGRGKKKGGKRGAGEAKEESKEEDRKEEEGVEVEEEESAEVPLVETVVGGARRKKKGSREKKMGEEHHYKVHSRVLRWKKDAEKIKRELDKGSEERWKGKSVEEIKEQKKVHDIVEVSELLRDKEKCDRFFVRTGKYMKGGSERWKMVANGILEEGGEKKVGKVEVGLFKGGRGESVVYHLMFRPTETERTGMVGGSSFGEGDDVDEIKKEKSSDMSGFRYPSGVRCEMTSNGNEFRIEYRNRKNTSEVLRTLTILRIPEIL</sequence>
<proteinExistence type="inferred from homology"/>